<name>TM10A_HUMAN</name>
<sequence length="339" mass="39719">MSSEMLPAFIETSNVDKKQGINEDQEESQKPRLGEGCEPISKRQMKKLIKQKQWEEQRELRKQKRKEKRKRKKLERQCQMEPNSDGHDRKRVRRDVVHSTLRLIIDCSFDHLMVLKDIKKLHKQIQRCYAENRRALHPVQFYLTSHGGQLKKNMDENDKGWVNWKDIHIKPEHYSELIKKEDLIYLTSDSPNILKELDESKAYVIGGLVDHNHHKGLTYKQASDYGINHAQLPLGNFVKMNSRKVLAVNHVFEIILEYLETRDWQEAFFTILPQRKGAVPTDKACESASHDNQSVRMEEGGSDSDSSEEEYSRNELDSPHEEKQDKENHTESTVNSLPH</sequence>
<dbReference type="EC" id="2.1.1.221" evidence="5 7"/>
<dbReference type="EMBL" id="AK313548">
    <property type="protein sequence ID" value="BAG36324.1"/>
    <property type="molecule type" value="mRNA"/>
</dbReference>
<dbReference type="EMBL" id="CH471057">
    <property type="protein sequence ID" value="EAX06104.1"/>
    <property type="molecule type" value="Genomic_DNA"/>
</dbReference>
<dbReference type="EMBL" id="BC028373">
    <property type="protein sequence ID" value="AAH28373.1"/>
    <property type="molecule type" value="mRNA"/>
</dbReference>
<dbReference type="EMBL" id="AF106046">
    <property type="protein sequence ID" value="AAD21019.1"/>
    <property type="molecule type" value="mRNA"/>
</dbReference>
<dbReference type="CCDS" id="CCDS3650.1"/>
<dbReference type="RefSeq" id="NP_001128137.1">
    <property type="nucleotide sequence ID" value="NM_001134665.3"/>
</dbReference>
<dbReference type="RefSeq" id="NP_001128138.1">
    <property type="nucleotide sequence ID" value="NM_001134666.3"/>
</dbReference>
<dbReference type="RefSeq" id="NP_001362809.1">
    <property type="nucleotide sequence ID" value="NM_001375880.1"/>
</dbReference>
<dbReference type="RefSeq" id="NP_001362810.1">
    <property type="nucleotide sequence ID" value="NM_001375881.1"/>
</dbReference>
<dbReference type="RefSeq" id="NP_689505.1">
    <property type="nucleotide sequence ID" value="NM_152292.5"/>
</dbReference>
<dbReference type="RefSeq" id="XP_005263409.1">
    <property type="nucleotide sequence ID" value="XM_005263352.3"/>
</dbReference>
<dbReference type="RefSeq" id="XP_006714480.1">
    <property type="nucleotide sequence ID" value="XM_006714417.2"/>
</dbReference>
<dbReference type="RefSeq" id="XP_047272374.1">
    <property type="nucleotide sequence ID" value="XM_047416418.1"/>
</dbReference>
<dbReference type="RefSeq" id="XP_054207242.1">
    <property type="nucleotide sequence ID" value="XM_054351267.1"/>
</dbReference>
<dbReference type="PDB" id="4FMW">
    <property type="method" value="X-ray"/>
    <property type="resolution" value="2.00 A"/>
    <property type="chains" value="A/B=82-277"/>
</dbReference>
<dbReference type="PDBsum" id="4FMW"/>
<dbReference type="SMR" id="Q8TBZ6"/>
<dbReference type="BioGRID" id="125035">
    <property type="interactions" value="26"/>
</dbReference>
<dbReference type="CORUM" id="Q8TBZ6"/>
<dbReference type="FunCoup" id="Q8TBZ6">
    <property type="interactions" value="3058"/>
</dbReference>
<dbReference type="IntAct" id="Q8TBZ6">
    <property type="interactions" value="8"/>
</dbReference>
<dbReference type="STRING" id="9606.ENSP00000273962"/>
<dbReference type="iPTMnet" id="Q8TBZ6"/>
<dbReference type="PhosphoSitePlus" id="Q8TBZ6"/>
<dbReference type="BioMuta" id="TRMT10A"/>
<dbReference type="DMDM" id="74730533"/>
<dbReference type="jPOST" id="Q8TBZ6"/>
<dbReference type="MassIVE" id="Q8TBZ6"/>
<dbReference type="PaxDb" id="9606-ENSP00000273962"/>
<dbReference type="PeptideAtlas" id="Q8TBZ6"/>
<dbReference type="ProteomicsDB" id="74061"/>
<dbReference type="Pumba" id="Q8TBZ6"/>
<dbReference type="Antibodypedia" id="14880">
    <property type="antibodies" value="89 antibodies from 16 providers"/>
</dbReference>
<dbReference type="DNASU" id="93587"/>
<dbReference type="Ensembl" id="ENST00000273962.7">
    <property type="protein sequence ID" value="ENSP00000273962.3"/>
    <property type="gene ID" value="ENSG00000145331.14"/>
</dbReference>
<dbReference type="Ensembl" id="ENST00000394876.7">
    <property type="protein sequence ID" value="ENSP00000378342.2"/>
    <property type="gene ID" value="ENSG00000145331.14"/>
</dbReference>
<dbReference type="Ensembl" id="ENST00000394877.7">
    <property type="protein sequence ID" value="ENSP00000378343.3"/>
    <property type="gene ID" value="ENSG00000145331.14"/>
</dbReference>
<dbReference type="GeneID" id="93587"/>
<dbReference type="KEGG" id="hsa:93587"/>
<dbReference type="MANE-Select" id="ENST00000394876.7">
    <property type="protein sequence ID" value="ENSP00000378342.2"/>
    <property type="RefSeq nucleotide sequence ID" value="NM_001134665.3"/>
    <property type="RefSeq protein sequence ID" value="NP_001128137.1"/>
</dbReference>
<dbReference type="AGR" id="HGNC:28403"/>
<dbReference type="CTD" id="93587"/>
<dbReference type="DisGeNET" id="93587"/>
<dbReference type="GeneCards" id="TRMT10A"/>
<dbReference type="HGNC" id="HGNC:28403">
    <property type="gene designation" value="TRMT10A"/>
</dbReference>
<dbReference type="HPA" id="ENSG00000145331">
    <property type="expression patterns" value="Low tissue specificity"/>
</dbReference>
<dbReference type="MalaCards" id="TRMT10A"/>
<dbReference type="MIM" id="616013">
    <property type="type" value="gene"/>
</dbReference>
<dbReference type="MIM" id="616033">
    <property type="type" value="phenotype"/>
</dbReference>
<dbReference type="neXtProt" id="NX_Q8TBZ6"/>
<dbReference type="OpenTargets" id="ENSG00000145331"/>
<dbReference type="Orphanet" id="391408">
    <property type="disease" value="Primary microcephaly-mild intellectual disability-young-onset diabetes syndrome"/>
</dbReference>
<dbReference type="PharmGKB" id="PA134979919"/>
<dbReference type="VEuPathDB" id="HostDB:ENSG00000145331"/>
<dbReference type="eggNOG" id="KOG2967">
    <property type="taxonomic scope" value="Eukaryota"/>
</dbReference>
<dbReference type="GeneTree" id="ENSGT00530000063169"/>
<dbReference type="HOGENOM" id="CLU_034384_7_0_1"/>
<dbReference type="InParanoid" id="Q8TBZ6"/>
<dbReference type="OMA" id="FKKNDGW"/>
<dbReference type="OrthoDB" id="278300at2759"/>
<dbReference type="PAN-GO" id="Q8TBZ6">
    <property type="GO annotations" value="6 GO annotations based on evolutionary models"/>
</dbReference>
<dbReference type="PhylomeDB" id="Q8TBZ6"/>
<dbReference type="TreeFam" id="TF330972"/>
<dbReference type="BRENDA" id="2.1.1.221">
    <property type="organism ID" value="2681"/>
</dbReference>
<dbReference type="PathwayCommons" id="Q8TBZ6"/>
<dbReference type="Reactome" id="R-HSA-6782315">
    <property type="pathway name" value="tRNA modification in the nucleus and cytosol"/>
</dbReference>
<dbReference type="SignaLink" id="Q8TBZ6"/>
<dbReference type="BioGRID-ORCS" id="93587">
    <property type="hits" value="31 hits in 1149 CRISPR screens"/>
</dbReference>
<dbReference type="CD-CODE" id="91857CE7">
    <property type="entry name" value="Nucleolus"/>
</dbReference>
<dbReference type="EvolutionaryTrace" id="Q8TBZ6"/>
<dbReference type="GenomeRNAi" id="93587"/>
<dbReference type="Pharos" id="Q8TBZ6">
    <property type="development level" value="Tbio"/>
</dbReference>
<dbReference type="PRO" id="PR:Q8TBZ6"/>
<dbReference type="Proteomes" id="UP000005640">
    <property type="component" value="Chromosome 4"/>
</dbReference>
<dbReference type="RNAct" id="Q8TBZ6">
    <property type="molecule type" value="protein"/>
</dbReference>
<dbReference type="Bgee" id="ENSG00000145331">
    <property type="expression patterns" value="Expressed in primordial germ cell in gonad and 136 other cell types or tissues"/>
</dbReference>
<dbReference type="ExpressionAtlas" id="Q8TBZ6">
    <property type="expression patterns" value="baseline and differential"/>
</dbReference>
<dbReference type="GO" id="GO:0015629">
    <property type="term" value="C:actin cytoskeleton"/>
    <property type="evidence" value="ECO:0000314"/>
    <property type="project" value="HPA"/>
</dbReference>
<dbReference type="GO" id="GO:0005829">
    <property type="term" value="C:cytosol"/>
    <property type="evidence" value="ECO:0000314"/>
    <property type="project" value="CAFA"/>
</dbReference>
<dbReference type="GO" id="GO:0070062">
    <property type="term" value="C:extracellular exosome"/>
    <property type="evidence" value="ECO:0007005"/>
    <property type="project" value="UniProtKB"/>
</dbReference>
<dbReference type="GO" id="GO:0005730">
    <property type="term" value="C:nucleolus"/>
    <property type="evidence" value="ECO:0000314"/>
    <property type="project" value="UniProtKB"/>
</dbReference>
<dbReference type="GO" id="GO:0005654">
    <property type="term" value="C:nucleoplasm"/>
    <property type="evidence" value="ECO:0000314"/>
    <property type="project" value="HPA"/>
</dbReference>
<dbReference type="GO" id="GO:0005634">
    <property type="term" value="C:nucleus"/>
    <property type="evidence" value="ECO:0000314"/>
    <property type="project" value="UniProtKB"/>
</dbReference>
<dbReference type="GO" id="GO:0003723">
    <property type="term" value="F:RNA binding"/>
    <property type="evidence" value="ECO:0007005"/>
    <property type="project" value="UniProtKB"/>
</dbReference>
<dbReference type="GO" id="GO:0052905">
    <property type="term" value="F:tRNA (guanosine(9)-N1)-methyltransferase activity"/>
    <property type="evidence" value="ECO:0000314"/>
    <property type="project" value="GO_Central"/>
</dbReference>
<dbReference type="GO" id="GO:0000049">
    <property type="term" value="F:tRNA binding"/>
    <property type="evidence" value="ECO:0000314"/>
    <property type="project" value="UniProtKB"/>
</dbReference>
<dbReference type="GO" id="GO:0030488">
    <property type="term" value="P:tRNA methylation"/>
    <property type="evidence" value="ECO:0000314"/>
    <property type="project" value="UniProtKB"/>
</dbReference>
<dbReference type="GO" id="GO:0002939">
    <property type="term" value="P:tRNA N1-guanine methylation"/>
    <property type="evidence" value="ECO:0000315"/>
    <property type="project" value="UniProtKB"/>
</dbReference>
<dbReference type="CDD" id="cd18101">
    <property type="entry name" value="Trm10euk_A"/>
    <property type="match status" value="1"/>
</dbReference>
<dbReference type="FunFam" id="3.40.1280.30:FF:000001">
    <property type="entry name" value="tRNA methyltransferase 10 homolog A"/>
    <property type="match status" value="1"/>
</dbReference>
<dbReference type="Gene3D" id="3.40.1280.30">
    <property type="match status" value="1"/>
</dbReference>
<dbReference type="InterPro" id="IPR028564">
    <property type="entry name" value="MT_TRM10-typ"/>
</dbReference>
<dbReference type="InterPro" id="IPR038459">
    <property type="entry name" value="MT_TRM10-typ_sf"/>
</dbReference>
<dbReference type="InterPro" id="IPR016653">
    <property type="entry name" value="TRM10/TRM10A"/>
</dbReference>
<dbReference type="InterPro" id="IPR007356">
    <property type="entry name" value="tRNA_m1G_MeTrfase_euk"/>
</dbReference>
<dbReference type="InterPro" id="IPR016009">
    <property type="entry name" value="tRNA_MeTrfase_TRMD/TRM10"/>
</dbReference>
<dbReference type="PANTHER" id="PTHR13563">
    <property type="entry name" value="TRNA (GUANINE-9-) METHYLTRANSFERASE"/>
    <property type="match status" value="1"/>
</dbReference>
<dbReference type="PANTHER" id="PTHR13563:SF13">
    <property type="entry name" value="TRNA METHYLTRANSFERASE 10 HOMOLOG A"/>
    <property type="match status" value="1"/>
</dbReference>
<dbReference type="Pfam" id="PF01746">
    <property type="entry name" value="tRNA_m1G_MT"/>
    <property type="match status" value="1"/>
</dbReference>
<dbReference type="PIRSF" id="PIRSF016323">
    <property type="entry name" value="tRNA_m1G_mtfrase_met"/>
    <property type="match status" value="1"/>
</dbReference>
<dbReference type="PROSITE" id="PS51675">
    <property type="entry name" value="SAM_MT_TRM10"/>
    <property type="match status" value="1"/>
</dbReference>
<feature type="chain" id="PRO_0000311315" description="tRNA methyltransferase 10 homolog A">
    <location>
        <begin position="1"/>
        <end position="339"/>
    </location>
</feature>
<feature type="domain" description="SAM-dependent MTase TRM10-type" evidence="2">
    <location>
        <begin position="89"/>
        <end position="279"/>
    </location>
</feature>
<feature type="region of interest" description="Disordered" evidence="3">
    <location>
        <begin position="1"/>
        <end position="90"/>
    </location>
</feature>
<feature type="region of interest" description="Disordered" evidence="3">
    <location>
        <begin position="282"/>
        <end position="339"/>
    </location>
</feature>
<feature type="coiled-coil region" evidence="1">
    <location>
        <begin position="52"/>
        <end position="81"/>
    </location>
</feature>
<feature type="compositionally biased region" description="Basic and acidic residues" evidence="3">
    <location>
        <begin position="14"/>
        <end position="35"/>
    </location>
</feature>
<feature type="compositionally biased region" description="Basic residues" evidence="3">
    <location>
        <begin position="61"/>
        <end position="74"/>
    </location>
</feature>
<feature type="compositionally biased region" description="Acidic residues" evidence="3">
    <location>
        <begin position="300"/>
        <end position="309"/>
    </location>
</feature>
<feature type="compositionally biased region" description="Basic and acidic residues" evidence="3">
    <location>
        <begin position="310"/>
        <end position="330"/>
    </location>
</feature>
<feature type="modified residue" description="Phosphoserine" evidence="11">
    <location>
        <position position="336"/>
    </location>
</feature>
<feature type="sequence variant" id="VAR_080046" description="In MSSGM1." evidence="8">
    <location>
        <begin position="27"/>
        <end position="339"/>
    </location>
</feature>
<feature type="sequence variant" id="VAR_037222" description="In a breast cancer sample; somatic mutation." evidence="4">
    <original>P</original>
    <variation>Q</variation>
    <location>
        <position position="82"/>
    </location>
</feature>
<feature type="sequence variant" id="VAR_080047" description="In MSSGM1." evidence="9">
    <location>
        <begin position="93"/>
        <end position="339"/>
    </location>
</feature>
<feature type="sequence variant" id="VAR_080048" description="In MSSGM1." evidence="9">
    <location>
        <begin position="133"/>
        <end position="339"/>
    </location>
</feature>
<feature type="sequence variant" id="VAR_037223" description="In dbSNP:rs10007569.">
    <original>R</original>
    <variation>Q</variation>
    <location>
        <position position="133"/>
    </location>
</feature>
<feature type="sequence variant" id="VAR_072420" description="In MSSGM1; results in loss of activity; does not affect affinity for Gly-tRNA; dbSNP:rs587777744." evidence="7">
    <original>G</original>
    <variation>R</variation>
    <location>
        <position position="206"/>
    </location>
</feature>
<feature type="sequence conflict" description="In Ref. 4; AAD21019." evidence="10" ref="4">
    <original>N</original>
    <variation>F</variation>
    <location>
        <position position="292"/>
    </location>
</feature>
<feature type="strand" evidence="12">
    <location>
        <begin position="102"/>
        <end position="106"/>
    </location>
</feature>
<feature type="helix" evidence="12">
    <location>
        <begin position="110"/>
        <end position="112"/>
    </location>
</feature>
<feature type="helix" evidence="12">
    <location>
        <begin position="115"/>
        <end position="134"/>
    </location>
</feature>
<feature type="strand" evidence="12">
    <location>
        <begin position="140"/>
        <end position="145"/>
    </location>
</feature>
<feature type="helix" evidence="12">
    <location>
        <begin position="148"/>
        <end position="157"/>
    </location>
</feature>
<feature type="helix" evidence="12">
    <location>
        <begin position="159"/>
        <end position="162"/>
    </location>
</feature>
<feature type="helix" evidence="12">
    <location>
        <begin position="174"/>
        <end position="177"/>
    </location>
</feature>
<feature type="helix" evidence="12">
    <location>
        <begin position="180"/>
        <end position="182"/>
    </location>
</feature>
<feature type="strand" evidence="12">
    <location>
        <begin position="183"/>
        <end position="186"/>
    </location>
</feature>
<feature type="strand" evidence="12">
    <location>
        <begin position="201"/>
        <end position="206"/>
    </location>
</feature>
<feature type="helix" evidence="12">
    <location>
        <begin position="217"/>
        <end position="225"/>
    </location>
</feature>
<feature type="strand" evidence="12">
    <location>
        <begin position="228"/>
        <end position="231"/>
    </location>
</feature>
<feature type="turn" evidence="12">
    <location>
        <begin position="235"/>
        <end position="237"/>
    </location>
</feature>
<feature type="helix" evidence="12">
    <location>
        <begin position="248"/>
        <end position="261"/>
    </location>
</feature>
<feature type="helix" evidence="12">
    <location>
        <begin position="264"/>
        <end position="271"/>
    </location>
</feature>
<reference key="1">
    <citation type="journal article" date="2004" name="Nat. Genet.">
        <title>Complete sequencing and characterization of 21,243 full-length human cDNAs.</title>
        <authorList>
            <person name="Ota T."/>
            <person name="Suzuki Y."/>
            <person name="Nishikawa T."/>
            <person name="Otsuki T."/>
            <person name="Sugiyama T."/>
            <person name="Irie R."/>
            <person name="Wakamatsu A."/>
            <person name="Hayashi K."/>
            <person name="Sato H."/>
            <person name="Nagai K."/>
            <person name="Kimura K."/>
            <person name="Makita H."/>
            <person name="Sekine M."/>
            <person name="Obayashi M."/>
            <person name="Nishi T."/>
            <person name="Shibahara T."/>
            <person name="Tanaka T."/>
            <person name="Ishii S."/>
            <person name="Yamamoto J."/>
            <person name="Saito K."/>
            <person name="Kawai Y."/>
            <person name="Isono Y."/>
            <person name="Nakamura Y."/>
            <person name="Nagahari K."/>
            <person name="Murakami K."/>
            <person name="Yasuda T."/>
            <person name="Iwayanagi T."/>
            <person name="Wagatsuma M."/>
            <person name="Shiratori A."/>
            <person name="Sudo H."/>
            <person name="Hosoiri T."/>
            <person name="Kaku Y."/>
            <person name="Kodaira H."/>
            <person name="Kondo H."/>
            <person name="Sugawara M."/>
            <person name="Takahashi M."/>
            <person name="Kanda K."/>
            <person name="Yokoi T."/>
            <person name="Furuya T."/>
            <person name="Kikkawa E."/>
            <person name="Omura Y."/>
            <person name="Abe K."/>
            <person name="Kamihara K."/>
            <person name="Katsuta N."/>
            <person name="Sato K."/>
            <person name="Tanikawa M."/>
            <person name="Yamazaki M."/>
            <person name="Ninomiya K."/>
            <person name="Ishibashi T."/>
            <person name="Yamashita H."/>
            <person name="Murakawa K."/>
            <person name="Fujimori K."/>
            <person name="Tanai H."/>
            <person name="Kimata M."/>
            <person name="Watanabe M."/>
            <person name="Hiraoka S."/>
            <person name="Chiba Y."/>
            <person name="Ishida S."/>
            <person name="Ono Y."/>
            <person name="Takiguchi S."/>
            <person name="Watanabe S."/>
            <person name="Yosida M."/>
            <person name="Hotuta T."/>
            <person name="Kusano J."/>
            <person name="Kanehori K."/>
            <person name="Takahashi-Fujii A."/>
            <person name="Hara H."/>
            <person name="Tanase T.-O."/>
            <person name="Nomura Y."/>
            <person name="Togiya S."/>
            <person name="Komai F."/>
            <person name="Hara R."/>
            <person name="Takeuchi K."/>
            <person name="Arita M."/>
            <person name="Imose N."/>
            <person name="Musashino K."/>
            <person name="Yuuki H."/>
            <person name="Oshima A."/>
            <person name="Sasaki N."/>
            <person name="Aotsuka S."/>
            <person name="Yoshikawa Y."/>
            <person name="Matsunawa H."/>
            <person name="Ichihara T."/>
            <person name="Shiohata N."/>
            <person name="Sano S."/>
            <person name="Moriya S."/>
            <person name="Momiyama H."/>
            <person name="Satoh N."/>
            <person name="Takami S."/>
            <person name="Terashima Y."/>
            <person name="Suzuki O."/>
            <person name="Nakagawa S."/>
            <person name="Senoh A."/>
            <person name="Mizoguchi H."/>
            <person name="Goto Y."/>
            <person name="Shimizu F."/>
            <person name="Wakebe H."/>
            <person name="Hishigaki H."/>
            <person name="Watanabe T."/>
            <person name="Sugiyama A."/>
            <person name="Takemoto M."/>
            <person name="Kawakami B."/>
            <person name="Yamazaki M."/>
            <person name="Watanabe K."/>
            <person name="Kumagai A."/>
            <person name="Itakura S."/>
            <person name="Fukuzumi Y."/>
            <person name="Fujimori Y."/>
            <person name="Komiyama M."/>
            <person name="Tashiro H."/>
            <person name="Tanigami A."/>
            <person name="Fujiwara T."/>
            <person name="Ono T."/>
            <person name="Yamada K."/>
            <person name="Fujii Y."/>
            <person name="Ozaki K."/>
            <person name="Hirao M."/>
            <person name="Ohmori Y."/>
            <person name="Kawabata A."/>
            <person name="Hikiji T."/>
            <person name="Kobatake N."/>
            <person name="Inagaki H."/>
            <person name="Ikema Y."/>
            <person name="Okamoto S."/>
            <person name="Okitani R."/>
            <person name="Kawakami T."/>
            <person name="Noguchi S."/>
            <person name="Itoh T."/>
            <person name="Shigeta K."/>
            <person name="Senba T."/>
            <person name="Matsumura K."/>
            <person name="Nakajima Y."/>
            <person name="Mizuno T."/>
            <person name="Morinaga M."/>
            <person name="Sasaki M."/>
            <person name="Togashi T."/>
            <person name="Oyama M."/>
            <person name="Hata H."/>
            <person name="Watanabe M."/>
            <person name="Komatsu T."/>
            <person name="Mizushima-Sugano J."/>
            <person name="Satoh T."/>
            <person name="Shirai Y."/>
            <person name="Takahashi Y."/>
            <person name="Nakagawa K."/>
            <person name="Okumura K."/>
            <person name="Nagase T."/>
            <person name="Nomura N."/>
            <person name="Kikuchi H."/>
            <person name="Masuho Y."/>
            <person name="Yamashita R."/>
            <person name="Nakai K."/>
            <person name="Yada T."/>
            <person name="Nakamura Y."/>
            <person name="Ohara O."/>
            <person name="Isogai T."/>
            <person name="Sugano S."/>
        </authorList>
    </citation>
    <scope>NUCLEOTIDE SEQUENCE [LARGE SCALE MRNA]</scope>
</reference>
<reference key="2">
    <citation type="submission" date="2005-09" db="EMBL/GenBank/DDBJ databases">
        <authorList>
            <person name="Mural R.J."/>
            <person name="Istrail S."/>
            <person name="Sutton G.G."/>
            <person name="Florea L."/>
            <person name="Halpern A.L."/>
            <person name="Mobarry C.M."/>
            <person name="Lippert R."/>
            <person name="Walenz B."/>
            <person name="Shatkay H."/>
            <person name="Dew I."/>
            <person name="Miller J.R."/>
            <person name="Flanigan M.J."/>
            <person name="Edwards N.J."/>
            <person name="Bolanos R."/>
            <person name="Fasulo D."/>
            <person name="Halldorsson B.V."/>
            <person name="Hannenhalli S."/>
            <person name="Turner R."/>
            <person name="Yooseph S."/>
            <person name="Lu F."/>
            <person name="Nusskern D.R."/>
            <person name="Shue B.C."/>
            <person name="Zheng X.H."/>
            <person name="Zhong F."/>
            <person name="Delcher A.L."/>
            <person name="Huson D.H."/>
            <person name="Kravitz S.A."/>
            <person name="Mouchard L."/>
            <person name="Reinert K."/>
            <person name="Remington K.A."/>
            <person name="Clark A.G."/>
            <person name="Waterman M.S."/>
            <person name="Eichler E.E."/>
            <person name="Adams M.D."/>
            <person name="Hunkapiller M.W."/>
            <person name="Myers E.W."/>
            <person name="Venter J.C."/>
        </authorList>
    </citation>
    <scope>NUCLEOTIDE SEQUENCE [LARGE SCALE GENOMIC DNA]</scope>
</reference>
<reference key="3">
    <citation type="journal article" date="2004" name="Genome Res.">
        <title>The status, quality, and expansion of the NIH full-length cDNA project: the Mammalian Gene Collection (MGC).</title>
        <authorList>
            <consortium name="The MGC Project Team"/>
        </authorList>
    </citation>
    <scope>NUCLEOTIDE SEQUENCE [LARGE SCALE MRNA]</scope>
    <source>
        <tissue>Testis</tissue>
    </source>
</reference>
<reference key="4">
    <citation type="submission" date="1998-11" db="EMBL/GenBank/DDBJ databases">
        <title>Homo sapiens cDNA clone 44 from HTLV-1 transformed lymphocyte library.</title>
        <authorList>
            <person name="Ji Y."/>
            <person name="Huang T."/>
            <person name="Johnson B.H."/>
            <person name="Thompson E.B."/>
        </authorList>
    </citation>
    <scope>NUCLEOTIDE SEQUENCE [MRNA] OF 107-339</scope>
</reference>
<reference key="5">
    <citation type="journal article" date="2012" name="Nucleic Acids Res.">
        <title>A subcomplex of human mitochondrial RNase P is a bifunctional methyltransferase--extensive moonlighting in mitochondrial tRNA biogenesis.</title>
        <authorList>
            <person name="Vilardo E."/>
            <person name="Nachbagauer C."/>
            <person name="Buzet A."/>
            <person name="Taschner A."/>
            <person name="Holzmann J."/>
            <person name="Rossmanith W."/>
        </authorList>
    </citation>
    <scope>FUNCTION</scope>
    <scope>CATALYTIC ACTIVITY</scope>
</reference>
<reference key="6">
    <citation type="journal article" date="2013" name="J. Proteome Res.">
        <title>Toward a comprehensive characterization of a human cancer cell phosphoproteome.</title>
        <authorList>
            <person name="Zhou H."/>
            <person name="Di Palma S."/>
            <person name="Preisinger C."/>
            <person name="Peng M."/>
            <person name="Polat A.N."/>
            <person name="Heck A.J."/>
            <person name="Mohammed S."/>
        </authorList>
    </citation>
    <scope>PHOSPHORYLATION [LARGE SCALE ANALYSIS] AT SER-336</scope>
    <scope>IDENTIFICATION BY MASS SPECTROMETRY [LARGE SCALE ANALYSIS]</scope>
    <source>
        <tissue>Erythroleukemia</tissue>
    </source>
</reference>
<reference key="7">
    <citation type="journal article" date="2013" name="PLoS Genet.">
        <title>tRNA methyltransferase homolog gene TRMT10A mutation in young onset diabetes and primary microcephaly in humans.</title>
        <authorList>
            <person name="Igoillo-Esteve M."/>
            <person name="Genin A."/>
            <person name="Lambert N."/>
            <person name="Desir J."/>
            <person name="Pirson I."/>
            <person name="Abdulkarim B."/>
            <person name="Simonis N."/>
            <person name="Drielsma A."/>
            <person name="Marselli L."/>
            <person name="Marchetti P."/>
            <person name="Vanderhaeghen P."/>
            <person name="Eizirik D.L."/>
            <person name="Wuyts W."/>
            <person name="Julier C."/>
            <person name="Chakera A.J."/>
            <person name="Ellard S."/>
            <person name="Hattersley A.T."/>
            <person name="Abramowicz M."/>
            <person name="Cnop M."/>
        </authorList>
    </citation>
    <scope>INVOLVEMENT IN MSSGM1</scope>
    <scope>TISSUE SPECIFICITY</scope>
    <scope>SUBCELLULAR LOCATION</scope>
</reference>
<reference key="8">
    <citation type="journal article" date="2014" name="J. Med. Genet.">
        <title>TRMT10A dysfunction is associated with abnormalities in glucose homeostasis, short stature and microcephaly.</title>
        <authorList>
            <person name="Gillis D."/>
            <person name="Krishnamohan A."/>
            <person name="Yaacov B."/>
            <person name="Shaag A."/>
            <person name="Jackman J.E."/>
            <person name="Elpeleg O."/>
        </authorList>
    </citation>
    <scope>FUNCTION</scope>
    <scope>INTERACTION WITH TRANSFER RNA</scope>
    <scope>INVOLVEMENT IN MSSGM1</scope>
    <scope>VARIANT MSSGM1 ARG-206</scope>
    <scope>CHARACTERIZATION OF VARIANT MSSGM1 ARG-206</scope>
</reference>
<reference key="9">
    <citation type="journal article" date="2006" name="Science">
        <title>The consensus coding sequences of human breast and colorectal cancers.</title>
        <authorList>
            <person name="Sjoeblom T."/>
            <person name="Jones S."/>
            <person name="Wood L.D."/>
            <person name="Parsons D.W."/>
            <person name="Lin J."/>
            <person name="Barber T.D."/>
            <person name="Mandelker D."/>
            <person name="Leary R.J."/>
            <person name="Ptak J."/>
            <person name="Silliman N."/>
            <person name="Szabo S."/>
            <person name="Buckhaults P."/>
            <person name="Farrell C."/>
            <person name="Meeh P."/>
            <person name="Markowitz S.D."/>
            <person name="Willis J."/>
            <person name="Dawson D."/>
            <person name="Willson J.K.V."/>
            <person name="Gazdar A.F."/>
            <person name="Hartigan J."/>
            <person name="Wu L."/>
            <person name="Liu C."/>
            <person name="Parmigiani G."/>
            <person name="Park B.H."/>
            <person name="Bachman K.E."/>
            <person name="Papadopoulos N."/>
            <person name="Vogelstein B."/>
            <person name="Kinzler K.W."/>
            <person name="Velculescu V.E."/>
        </authorList>
    </citation>
    <scope>VARIANT [LARGE SCALE ANALYSIS] GLN-82</scope>
</reference>
<reference key="10">
    <citation type="journal article" date="2015" name="F1000Research">
        <title>Case Report: Compound heterozygous nonsense mutations in TRMT10A are associated with microcephaly, delayed development, and periventricular white matter hyperintensities.</title>
        <authorList>
            <consortium name="C4RCD Research Group"/>
            <person name="Narayanan M."/>
            <person name="Ramsey K."/>
            <person name="Grebe T."/>
            <person name="Schrauwen I."/>
            <person name="Szelinger S."/>
            <person name="Huentelman M."/>
            <person name="Craig D."/>
            <person name="Narayanan V."/>
        </authorList>
    </citation>
    <scope>VARIANTS MSSGM1 93-ARG--HIS-339 DEL AND 133-ARG--HIS-339 DEL</scope>
</reference>
<reference key="11">
    <citation type="journal article" date="2016" name="Diabet. Med.">
        <title>tRNA methyltransferase homologue gene TRMT10A mutation in young adult-onset diabetes with intellectual disability, microcephaly and epilepsy.</title>
        <authorList>
            <person name="Yew T.W."/>
            <person name="McCreight L."/>
            <person name="Colclough K."/>
            <person name="Ellard S."/>
            <person name="Pearson E.R."/>
        </authorList>
    </citation>
    <scope>VARIANT MSSGM1 27-GLU--HIS-339 DEL</scope>
</reference>
<proteinExistence type="evidence at protein level"/>
<evidence type="ECO:0000255" key="1"/>
<evidence type="ECO:0000255" key="2">
    <source>
        <dbReference type="PROSITE-ProRule" id="PRU01012"/>
    </source>
</evidence>
<evidence type="ECO:0000256" key="3">
    <source>
        <dbReference type="SAM" id="MobiDB-lite"/>
    </source>
</evidence>
<evidence type="ECO:0000269" key="4">
    <source>
    </source>
</evidence>
<evidence type="ECO:0000269" key="5">
    <source>
    </source>
</evidence>
<evidence type="ECO:0000269" key="6">
    <source>
    </source>
</evidence>
<evidence type="ECO:0000269" key="7">
    <source>
    </source>
</evidence>
<evidence type="ECO:0000269" key="8">
    <source>
    </source>
</evidence>
<evidence type="ECO:0000269" key="9">
    <source>
    </source>
</evidence>
<evidence type="ECO:0000305" key="10"/>
<evidence type="ECO:0007744" key="11">
    <source>
    </source>
</evidence>
<evidence type="ECO:0007829" key="12">
    <source>
        <dbReference type="PDB" id="4FMW"/>
    </source>
</evidence>
<accession>Q8TBZ6</accession>
<accession>B2R8X7</accession>
<accession>Q9Y2T9</accession>
<protein>
    <recommendedName>
        <fullName>tRNA methyltransferase 10 homolog A</fullName>
        <ecNumber evidence="5 7">2.1.1.221</ecNumber>
    </recommendedName>
    <alternativeName>
        <fullName>RNA (guanine-9-)-methyltransferase domain-containing protein 2</fullName>
    </alternativeName>
    <alternativeName>
        <fullName>tRNA (guanine(9)-N(1))-methyltransferase TRMT10A</fullName>
    </alternativeName>
</protein>
<organism>
    <name type="scientific">Homo sapiens</name>
    <name type="common">Human</name>
    <dbReference type="NCBI Taxonomy" id="9606"/>
    <lineage>
        <taxon>Eukaryota</taxon>
        <taxon>Metazoa</taxon>
        <taxon>Chordata</taxon>
        <taxon>Craniata</taxon>
        <taxon>Vertebrata</taxon>
        <taxon>Euteleostomi</taxon>
        <taxon>Mammalia</taxon>
        <taxon>Eutheria</taxon>
        <taxon>Euarchontoglires</taxon>
        <taxon>Primates</taxon>
        <taxon>Haplorrhini</taxon>
        <taxon>Catarrhini</taxon>
        <taxon>Hominidae</taxon>
        <taxon>Homo</taxon>
    </lineage>
</organism>
<comment type="function">
    <text evidence="5 7">S-adenosyl-L-methionine-dependent guanine N(1)-methyltransferase that catalyzes the formation of N(1)-methylguanine at position 9 (m1G9) in tRNAs (PubMed:23042678, PubMed:25053765). Probably not able to catalyze formation of N(1)-methyladenine at position 9 (m1A9) in tRNAs (PubMed:23042678).</text>
</comment>
<comment type="catalytic activity">
    <reaction evidence="5 7">
        <text>guanosine(9) in tRNA + S-adenosyl-L-methionine = N(1)-methylguanosine(9) in tRNA + S-adenosyl-L-homocysteine + H(+)</text>
        <dbReference type="Rhea" id="RHEA:43156"/>
        <dbReference type="Rhea" id="RHEA-COMP:10367"/>
        <dbReference type="Rhea" id="RHEA-COMP:10368"/>
        <dbReference type="ChEBI" id="CHEBI:15378"/>
        <dbReference type="ChEBI" id="CHEBI:57856"/>
        <dbReference type="ChEBI" id="CHEBI:59789"/>
        <dbReference type="ChEBI" id="CHEBI:73542"/>
        <dbReference type="ChEBI" id="CHEBI:74269"/>
        <dbReference type="EC" id="2.1.1.221"/>
    </reaction>
</comment>
<comment type="subunit">
    <text evidence="7">Interacts with tRNA.</text>
</comment>
<comment type="interaction">
    <interactant intactId="EBI-11059925">
        <id>Q8TBZ6</id>
    </interactant>
    <interactant intactId="EBI-2813981">
        <id>Q9C029</id>
        <label>TRIM7</label>
    </interactant>
    <organismsDiffer>false</organismsDiffer>
    <experiments>3</experiments>
</comment>
<comment type="subcellular location">
    <subcellularLocation>
        <location evidence="6">Nucleus</location>
    </subcellularLocation>
    <subcellularLocation>
        <location evidence="6">Nucleus</location>
        <location evidence="6">Nucleolus</location>
    </subcellularLocation>
</comment>
<comment type="tissue specificity">
    <text evidence="6">Expressed in embryonic and fetal brain. It is expressed throughout the dorsal telencephalon at 8 and 11 weeks of gestation, with highest expression in ventricular zone and marginal zone. Detected in cerebellar cortex and nuclei, but not in dorsal telencephalon, at later stages.</text>
</comment>
<comment type="disease" evidence="6 7 8 9">
    <disease id="DI-04234">
        <name>Microcephaly, short stature, and impaired glucose metabolism 1</name>
        <acronym>MSSGM1</acronym>
        <description>An autosomal recessive disease characterized by microcephaly, intellectual disability, short stature, and disturbed glucose metabolism. Additional clinical features include delayed puberty, hypoglycemia-related seizures, hyperinsulinemic hypoglycemia, and early-onset diabetes.</description>
        <dbReference type="MIM" id="616033"/>
    </disease>
    <text>The disease is caused by variants affecting the gene represented in this entry.</text>
</comment>
<comment type="similarity">
    <text evidence="2">Belongs to the class IV-like SAM-binding methyltransferase superfamily. TRM10 family.</text>
</comment>
<keyword id="KW-0002">3D-structure</keyword>
<keyword id="KW-0175">Coiled coil</keyword>
<keyword id="KW-0219">Diabetes mellitus</keyword>
<keyword id="KW-0225">Disease variant</keyword>
<keyword id="KW-0242">Dwarfism</keyword>
<keyword id="KW-0991">Intellectual disability</keyword>
<keyword id="KW-0489">Methyltransferase</keyword>
<keyword id="KW-0539">Nucleus</keyword>
<keyword id="KW-0597">Phosphoprotein</keyword>
<keyword id="KW-1267">Proteomics identification</keyword>
<keyword id="KW-1185">Reference proteome</keyword>
<keyword id="KW-0949">S-adenosyl-L-methionine</keyword>
<keyword id="KW-0808">Transferase</keyword>
<gene>
    <name type="primary">TRMT10A</name>
    <name type="synonym">RG9MTD2</name>
</gene>